<name>CK5P3_MOUSE</name>
<reference key="1">
    <citation type="journal article" date="2005" name="Science">
        <title>The transcriptional landscape of the mammalian genome.</title>
        <authorList>
            <person name="Carninci P."/>
            <person name="Kasukawa T."/>
            <person name="Katayama S."/>
            <person name="Gough J."/>
            <person name="Frith M.C."/>
            <person name="Maeda N."/>
            <person name="Oyama R."/>
            <person name="Ravasi T."/>
            <person name="Lenhard B."/>
            <person name="Wells C."/>
            <person name="Kodzius R."/>
            <person name="Shimokawa K."/>
            <person name="Bajic V.B."/>
            <person name="Brenner S.E."/>
            <person name="Batalov S."/>
            <person name="Forrest A.R."/>
            <person name="Zavolan M."/>
            <person name="Davis M.J."/>
            <person name="Wilming L.G."/>
            <person name="Aidinis V."/>
            <person name="Allen J.E."/>
            <person name="Ambesi-Impiombato A."/>
            <person name="Apweiler R."/>
            <person name="Aturaliya R.N."/>
            <person name="Bailey T.L."/>
            <person name="Bansal M."/>
            <person name="Baxter L."/>
            <person name="Beisel K.W."/>
            <person name="Bersano T."/>
            <person name="Bono H."/>
            <person name="Chalk A.M."/>
            <person name="Chiu K.P."/>
            <person name="Choudhary V."/>
            <person name="Christoffels A."/>
            <person name="Clutterbuck D.R."/>
            <person name="Crowe M.L."/>
            <person name="Dalla E."/>
            <person name="Dalrymple B.P."/>
            <person name="de Bono B."/>
            <person name="Della Gatta G."/>
            <person name="di Bernardo D."/>
            <person name="Down T."/>
            <person name="Engstrom P."/>
            <person name="Fagiolini M."/>
            <person name="Faulkner G."/>
            <person name="Fletcher C.F."/>
            <person name="Fukushima T."/>
            <person name="Furuno M."/>
            <person name="Futaki S."/>
            <person name="Gariboldi M."/>
            <person name="Georgii-Hemming P."/>
            <person name="Gingeras T.R."/>
            <person name="Gojobori T."/>
            <person name="Green R.E."/>
            <person name="Gustincich S."/>
            <person name="Harbers M."/>
            <person name="Hayashi Y."/>
            <person name="Hensch T.K."/>
            <person name="Hirokawa N."/>
            <person name="Hill D."/>
            <person name="Huminiecki L."/>
            <person name="Iacono M."/>
            <person name="Ikeo K."/>
            <person name="Iwama A."/>
            <person name="Ishikawa T."/>
            <person name="Jakt M."/>
            <person name="Kanapin A."/>
            <person name="Katoh M."/>
            <person name="Kawasawa Y."/>
            <person name="Kelso J."/>
            <person name="Kitamura H."/>
            <person name="Kitano H."/>
            <person name="Kollias G."/>
            <person name="Krishnan S.P."/>
            <person name="Kruger A."/>
            <person name="Kummerfeld S.K."/>
            <person name="Kurochkin I.V."/>
            <person name="Lareau L.F."/>
            <person name="Lazarevic D."/>
            <person name="Lipovich L."/>
            <person name="Liu J."/>
            <person name="Liuni S."/>
            <person name="McWilliam S."/>
            <person name="Madan Babu M."/>
            <person name="Madera M."/>
            <person name="Marchionni L."/>
            <person name="Matsuda H."/>
            <person name="Matsuzawa S."/>
            <person name="Miki H."/>
            <person name="Mignone F."/>
            <person name="Miyake S."/>
            <person name="Morris K."/>
            <person name="Mottagui-Tabar S."/>
            <person name="Mulder N."/>
            <person name="Nakano N."/>
            <person name="Nakauchi H."/>
            <person name="Ng P."/>
            <person name="Nilsson R."/>
            <person name="Nishiguchi S."/>
            <person name="Nishikawa S."/>
            <person name="Nori F."/>
            <person name="Ohara O."/>
            <person name="Okazaki Y."/>
            <person name="Orlando V."/>
            <person name="Pang K.C."/>
            <person name="Pavan W.J."/>
            <person name="Pavesi G."/>
            <person name="Pesole G."/>
            <person name="Petrovsky N."/>
            <person name="Piazza S."/>
            <person name="Reed J."/>
            <person name="Reid J.F."/>
            <person name="Ring B.Z."/>
            <person name="Ringwald M."/>
            <person name="Rost B."/>
            <person name="Ruan Y."/>
            <person name="Salzberg S.L."/>
            <person name="Sandelin A."/>
            <person name="Schneider C."/>
            <person name="Schoenbach C."/>
            <person name="Sekiguchi K."/>
            <person name="Semple C.A."/>
            <person name="Seno S."/>
            <person name="Sessa L."/>
            <person name="Sheng Y."/>
            <person name="Shibata Y."/>
            <person name="Shimada H."/>
            <person name="Shimada K."/>
            <person name="Silva D."/>
            <person name="Sinclair B."/>
            <person name="Sperling S."/>
            <person name="Stupka E."/>
            <person name="Sugiura K."/>
            <person name="Sultana R."/>
            <person name="Takenaka Y."/>
            <person name="Taki K."/>
            <person name="Tammoja K."/>
            <person name="Tan S.L."/>
            <person name="Tang S."/>
            <person name="Taylor M.S."/>
            <person name="Tegner J."/>
            <person name="Teichmann S.A."/>
            <person name="Ueda H.R."/>
            <person name="van Nimwegen E."/>
            <person name="Verardo R."/>
            <person name="Wei C.L."/>
            <person name="Yagi K."/>
            <person name="Yamanishi H."/>
            <person name="Zabarovsky E."/>
            <person name="Zhu S."/>
            <person name="Zimmer A."/>
            <person name="Hide W."/>
            <person name="Bult C."/>
            <person name="Grimmond S.M."/>
            <person name="Teasdale R.D."/>
            <person name="Liu E.T."/>
            <person name="Brusic V."/>
            <person name="Quackenbush J."/>
            <person name="Wahlestedt C."/>
            <person name="Mattick J.S."/>
            <person name="Hume D.A."/>
            <person name="Kai C."/>
            <person name="Sasaki D."/>
            <person name="Tomaru Y."/>
            <person name="Fukuda S."/>
            <person name="Kanamori-Katayama M."/>
            <person name="Suzuki M."/>
            <person name="Aoki J."/>
            <person name="Arakawa T."/>
            <person name="Iida J."/>
            <person name="Imamura K."/>
            <person name="Itoh M."/>
            <person name="Kato T."/>
            <person name="Kawaji H."/>
            <person name="Kawagashira N."/>
            <person name="Kawashima T."/>
            <person name="Kojima M."/>
            <person name="Kondo S."/>
            <person name="Konno H."/>
            <person name="Nakano K."/>
            <person name="Ninomiya N."/>
            <person name="Nishio T."/>
            <person name="Okada M."/>
            <person name="Plessy C."/>
            <person name="Shibata K."/>
            <person name="Shiraki T."/>
            <person name="Suzuki S."/>
            <person name="Tagami M."/>
            <person name="Waki K."/>
            <person name="Watahiki A."/>
            <person name="Okamura-Oho Y."/>
            <person name="Suzuki H."/>
            <person name="Kawai J."/>
            <person name="Hayashizaki Y."/>
        </authorList>
    </citation>
    <scope>NUCLEOTIDE SEQUENCE [LARGE SCALE MRNA]</scope>
    <source>
        <strain>C57BL/6J</strain>
        <tissue>Bone marrow</tissue>
        <tissue>Forelimb</tissue>
        <tissue>Pancreas</tissue>
    </source>
</reference>
<reference key="2">
    <citation type="journal article" date="2004" name="Genome Res.">
        <title>The status, quality, and expansion of the NIH full-length cDNA project: the Mammalian Gene Collection (MGC).</title>
        <authorList>
            <consortium name="The MGC Project Team"/>
        </authorList>
    </citation>
    <scope>NUCLEOTIDE SEQUENCE [LARGE SCALE MRNA]</scope>
    <source>
        <tissue>Mammary tumor</tissue>
    </source>
</reference>
<reference key="3">
    <citation type="journal article" date="2010" name="Cell">
        <title>A tissue-specific atlas of mouse protein phosphorylation and expression.</title>
        <authorList>
            <person name="Huttlin E.L."/>
            <person name="Jedrychowski M.P."/>
            <person name="Elias J.E."/>
            <person name="Goswami T."/>
            <person name="Rad R."/>
            <person name="Beausoleil S.A."/>
            <person name="Villen J."/>
            <person name="Haas W."/>
            <person name="Sowa M.E."/>
            <person name="Gygi S.P."/>
        </authorList>
    </citation>
    <scope>IDENTIFICATION BY MASS SPECTROMETRY [LARGE SCALE ANALYSIS]</scope>
    <source>
        <tissue>Brain</tissue>
        <tissue>Brown adipose tissue</tissue>
        <tissue>Heart</tissue>
        <tissue>Kidney</tissue>
        <tissue>Liver</tissue>
        <tissue>Lung</tissue>
        <tissue>Pancreas</tissue>
        <tissue>Spleen</tissue>
        <tissue>Testis</tissue>
    </source>
</reference>
<reference key="4">
    <citation type="journal article" date="2011" name="PLoS ONE">
        <title>Ubiquitin fold modifier 1 (UFM1) and its target UFBP1 protect pancreatic beta cells from ER stress-induced apoptosis.</title>
        <authorList>
            <person name="Lemaire K."/>
            <person name="Moura R.F."/>
            <person name="Granvik M."/>
            <person name="Igoillo-Esteve M."/>
            <person name="Hohmeier H.E."/>
            <person name="Hendrickx N."/>
            <person name="Newgard C.B."/>
            <person name="Waelkens E."/>
            <person name="Cnop M."/>
            <person name="Schuit F."/>
        </authorList>
    </citation>
    <scope>INTERACTION WITH UFL1</scope>
    <scope>UFMYLATION</scope>
    <scope>TISSUE SPECIFICITY</scope>
</reference>
<reference key="5">
    <citation type="journal article" date="2019" name="Development">
        <title>CDK5RAP3, a UFL1 substrate adaptor, is crucial for liver development.</title>
        <authorList>
            <person name="Yang R."/>
            <person name="Wang H."/>
            <person name="Kang B."/>
            <person name="Chen B."/>
            <person name="Shi Y."/>
            <person name="Yang S."/>
            <person name="Sun L."/>
            <person name="Liu Y."/>
            <person name="Xiao W."/>
            <person name="Zhang T."/>
            <person name="Yang J."/>
            <person name="Zhang Y."/>
            <person name="Zhu M."/>
            <person name="Xu P."/>
            <person name="Chang Y."/>
            <person name="Jia Y."/>
            <person name="Huang Y."/>
        </authorList>
    </citation>
    <scope>FUNCTION</scope>
    <scope>SUBCELLULAR LOCATION</scope>
    <scope>DEVELOPMENTAL STAGE</scope>
    <scope>DISRUPTION PHENOTYPE</scope>
    <scope>INTERACTION WITH UFL1</scope>
</reference>
<sequence length="503" mass="56991">MQDHQHVPIDIQTSKLLDWLVDRRHCNLKWQSLVLTIREKINTAIQDMPESQEIAQLLSGSYIHYFHCLRIVDLLKGTEASTKNIFGRYSSQRMKDWQEIVSLYEKDNTYLVELCSLLVRNVSYEIPSLKKQIAKCQQLQQEYSRKEEEGQAGAAEMREQFYHSCKQYGITGDNVRRELLALVKDLPSQLAEIGAGAQSLGEAIDLYQACVEFVCDSPTEQVLPMLRYVQKKGNSTVYEWRTGTEPSVVERPQLEEPPEQVQEDEIDWGDFGVEAVSDSGIVAETPGIDWGISLESEAKDAGADKIDWGDDAAAASEITVLETGTEAPEGVARGSDALTLLEYPETRNQFIDELMELEIFLSQRAVEMSEEADILSVSQFQLAPAILQGQTKEKMLSLVSTLQQLIGRLTSLRMQHLFMILASPRYVDRVTEFLQQKLKQSQLLALKKELMVEKQQEALQEQAALEPKLDLLLEKTRELQKLIEADISKRYSGRPVNLMGTSL</sequence>
<dbReference type="EMBL" id="AK075771">
    <property type="protein sequence ID" value="BAC35945.1"/>
    <property type="molecule type" value="mRNA"/>
</dbReference>
<dbReference type="EMBL" id="AK075791">
    <property type="protein sequence ID" value="BAC35961.1"/>
    <property type="molecule type" value="mRNA"/>
</dbReference>
<dbReference type="EMBL" id="AK077853">
    <property type="protein sequence ID" value="BAC37034.1"/>
    <property type="molecule type" value="mRNA"/>
</dbReference>
<dbReference type="EMBL" id="AK149765">
    <property type="protein sequence ID" value="BAE29070.1"/>
    <property type="molecule type" value="mRNA"/>
</dbReference>
<dbReference type="EMBL" id="BC002318">
    <property type="protein sequence ID" value="AAH02318.1"/>
    <property type="molecule type" value="mRNA"/>
</dbReference>
<dbReference type="CCDS" id="CCDS25306.1"/>
<dbReference type="RefSeq" id="NP_084524.1">
    <property type="nucleotide sequence ID" value="NM_030248.2"/>
</dbReference>
<dbReference type="SMR" id="Q99LM2"/>
<dbReference type="BioGRID" id="219769">
    <property type="interactions" value="2"/>
</dbReference>
<dbReference type="FunCoup" id="Q99LM2">
    <property type="interactions" value="2712"/>
</dbReference>
<dbReference type="IntAct" id="Q99LM2">
    <property type="interactions" value="1"/>
</dbReference>
<dbReference type="MINT" id="Q99LM2"/>
<dbReference type="STRING" id="10090.ENSMUSP00000099441"/>
<dbReference type="GlyGen" id="Q99LM2">
    <property type="glycosylation" value="1 site, 1 N-linked glycan (1 site)"/>
</dbReference>
<dbReference type="iPTMnet" id="Q99LM2"/>
<dbReference type="PhosphoSitePlus" id="Q99LM2"/>
<dbReference type="SwissPalm" id="Q99LM2"/>
<dbReference type="jPOST" id="Q99LM2"/>
<dbReference type="PaxDb" id="10090-ENSMUSP00000099441"/>
<dbReference type="ProteomicsDB" id="283508"/>
<dbReference type="Pumba" id="Q99LM2"/>
<dbReference type="Antibodypedia" id="8591">
    <property type="antibodies" value="234 antibodies from 31 providers"/>
</dbReference>
<dbReference type="Ensembl" id="ENSMUST00000103152.11">
    <property type="protein sequence ID" value="ENSMUSP00000099441.5"/>
    <property type="gene ID" value="ENSMUSG00000018669.15"/>
</dbReference>
<dbReference type="GeneID" id="80280"/>
<dbReference type="KEGG" id="mmu:80280"/>
<dbReference type="UCSC" id="uc007lcv.1">
    <property type="organism name" value="mouse"/>
</dbReference>
<dbReference type="AGR" id="MGI:1933126"/>
<dbReference type="CTD" id="80279"/>
<dbReference type="MGI" id="MGI:1933126">
    <property type="gene designation" value="Cdk5rap3"/>
</dbReference>
<dbReference type="VEuPathDB" id="HostDB:ENSMUSG00000018669"/>
<dbReference type="eggNOG" id="KOG2607">
    <property type="taxonomic scope" value="Eukaryota"/>
</dbReference>
<dbReference type="GeneTree" id="ENSGT00390000000713"/>
<dbReference type="HOGENOM" id="CLU_025645_1_0_1"/>
<dbReference type="InParanoid" id="Q99LM2"/>
<dbReference type="OMA" id="CRLYEKN"/>
<dbReference type="OrthoDB" id="340432at2759"/>
<dbReference type="PhylomeDB" id="Q99LM2"/>
<dbReference type="BioGRID-ORCS" id="80280">
    <property type="hits" value="14 hits in 79 CRISPR screens"/>
</dbReference>
<dbReference type="ChiTaRS" id="Cdk5rap3">
    <property type="organism name" value="mouse"/>
</dbReference>
<dbReference type="PRO" id="PR:Q99LM2"/>
<dbReference type="Proteomes" id="UP000000589">
    <property type="component" value="Chromosome 11"/>
</dbReference>
<dbReference type="RNAct" id="Q99LM2">
    <property type="molecule type" value="protein"/>
</dbReference>
<dbReference type="Bgee" id="ENSMUSG00000018669">
    <property type="expression patterns" value="Expressed in lacrimal gland and 260 other cell types or tissues"/>
</dbReference>
<dbReference type="ExpressionAtlas" id="Q99LM2">
    <property type="expression patterns" value="baseline and differential"/>
</dbReference>
<dbReference type="GO" id="GO:0005813">
    <property type="term" value="C:centrosome"/>
    <property type="evidence" value="ECO:0000250"/>
    <property type="project" value="UniProtKB"/>
</dbReference>
<dbReference type="GO" id="GO:0005737">
    <property type="term" value="C:cytoplasm"/>
    <property type="evidence" value="ECO:0000315"/>
    <property type="project" value="UniProtKB"/>
</dbReference>
<dbReference type="GO" id="GO:0005829">
    <property type="term" value="C:cytosol"/>
    <property type="evidence" value="ECO:0007669"/>
    <property type="project" value="Ensembl"/>
</dbReference>
<dbReference type="GO" id="GO:0005789">
    <property type="term" value="C:endoplasmic reticulum membrane"/>
    <property type="evidence" value="ECO:0000250"/>
    <property type="project" value="UniProtKB"/>
</dbReference>
<dbReference type="GO" id="GO:0005874">
    <property type="term" value="C:microtubule"/>
    <property type="evidence" value="ECO:0007669"/>
    <property type="project" value="Ensembl"/>
</dbReference>
<dbReference type="GO" id="GO:0005730">
    <property type="term" value="C:nucleolus"/>
    <property type="evidence" value="ECO:0007669"/>
    <property type="project" value="Ensembl"/>
</dbReference>
<dbReference type="GO" id="GO:0005634">
    <property type="term" value="C:nucleus"/>
    <property type="evidence" value="ECO:0000250"/>
    <property type="project" value="UniProtKB"/>
</dbReference>
<dbReference type="GO" id="GO:0032991">
    <property type="term" value="C:protein-containing complex"/>
    <property type="evidence" value="ECO:0000266"/>
    <property type="project" value="MGI"/>
</dbReference>
<dbReference type="GO" id="GO:0030332">
    <property type="term" value="F:cyclin binding"/>
    <property type="evidence" value="ECO:0007669"/>
    <property type="project" value="Ensembl"/>
</dbReference>
<dbReference type="GO" id="GO:0097371">
    <property type="term" value="F:MDM2/MDM4 family protein binding"/>
    <property type="evidence" value="ECO:0007669"/>
    <property type="project" value="Ensembl"/>
</dbReference>
<dbReference type="GO" id="GO:0051019">
    <property type="term" value="F:mitogen-activated protein kinase binding"/>
    <property type="evidence" value="ECO:0007669"/>
    <property type="project" value="Ensembl"/>
</dbReference>
<dbReference type="GO" id="GO:0051059">
    <property type="term" value="F:NF-kappaB binding"/>
    <property type="evidence" value="ECO:0007669"/>
    <property type="project" value="Ensembl"/>
</dbReference>
<dbReference type="GO" id="GO:1990756">
    <property type="term" value="F:ubiquitin-like ligase-substrate adaptor activity"/>
    <property type="evidence" value="ECO:0000250"/>
    <property type="project" value="UniProtKB"/>
</dbReference>
<dbReference type="GO" id="GO:0044389">
    <property type="term" value="F:ubiquitin-like protein ligase binding"/>
    <property type="evidence" value="ECO:0000353"/>
    <property type="project" value="UniProtKB"/>
</dbReference>
<dbReference type="GO" id="GO:0030262">
    <property type="term" value="P:apoptotic nuclear changes"/>
    <property type="evidence" value="ECO:0000250"/>
    <property type="project" value="UniProtKB"/>
</dbReference>
<dbReference type="GO" id="GO:0008283">
    <property type="term" value="P:cell population proliferation"/>
    <property type="evidence" value="ECO:0000250"/>
    <property type="project" value="UniProtKB"/>
</dbReference>
<dbReference type="GO" id="GO:0060318">
    <property type="term" value="P:definitive erythrocyte differentiation"/>
    <property type="evidence" value="ECO:0000315"/>
    <property type="project" value="UniProtKB"/>
</dbReference>
<dbReference type="GO" id="GO:0030968">
    <property type="term" value="P:endoplasmic reticulum unfolded protein response"/>
    <property type="evidence" value="ECO:0000250"/>
    <property type="project" value="UniProtKB"/>
</dbReference>
<dbReference type="GO" id="GO:0001889">
    <property type="term" value="P:liver development"/>
    <property type="evidence" value="ECO:0000315"/>
    <property type="project" value="UniProtKB"/>
</dbReference>
<dbReference type="GO" id="GO:0007095">
    <property type="term" value="P:mitotic G2 DNA damage checkpoint signaling"/>
    <property type="evidence" value="ECO:0000250"/>
    <property type="project" value="UniProtKB"/>
</dbReference>
<dbReference type="GO" id="GO:0044818">
    <property type="term" value="P:mitotic G2/M transition checkpoint"/>
    <property type="evidence" value="ECO:0000250"/>
    <property type="project" value="UniProtKB"/>
</dbReference>
<dbReference type="GO" id="GO:0043407">
    <property type="term" value="P:negative regulation of MAP kinase activity"/>
    <property type="evidence" value="ECO:0000250"/>
    <property type="project" value="UniProtKB"/>
</dbReference>
<dbReference type="GO" id="GO:0032088">
    <property type="term" value="P:negative regulation of NF-kappaB transcription factor activity"/>
    <property type="evidence" value="ECO:0000250"/>
    <property type="project" value="UniProtKB"/>
</dbReference>
<dbReference type="GO" id="GO:0042177">
    <property type="term" value="P:negative regulation of protein catabolic process"/>
    <property type="evidence" value="ECO:0000250"/>
    <property type="project" value="UniProtKB"/>
</dbReference>
<dbReference type="GO" id="GO:0044387">
    <property type="term" value="P:negative regulation of protein kinase activity by regulation of protein phosphorylation"/>
    <property type="evidence" value="ECO:0000250"/>
    <property type="project" value="UniProtKB"/>
</dbReference>
<dbReference type="GO" id="GO:0001933">
    <property type="term" value="P:negative regulation of protein phosphorylation"/>
    <property type="evidence" value="ECO:0000250"/>
    <property type="project" value="UniProtKB"/>
</dbReference>
<dbReference type="GO" id="GO:0071901">
    <property type="term" value="P:negative regulation of protein serine/threonine kinase activity"/>
    <property type="evidence" value="ECO:0000250"/>
    <property type="project" value="UniProtKB"/>
</dbReference>
<dbReference type="GO" id="GO:1900182">
    <property type="term" value="P:positive regulation of protein localization to nucleus"/>
    <property type="evidence" value="ECO:0000250"/>
    <property type="project" value="UniProtKB"/>
</dbReference>
<dbReference type="GO" id="GO:0031398">
    <property type="term" value="P:positive regulation of protein ubiquitination"/>
    <property type="evidence" value="ECO:0000250"/>
    <property type="project" value="UniProtKB"/>
</dbReference>
<dbReference type="GO" id="GO:0140501">
    <property type="term" value="P:positive regulation of reticulophagy"/>
    <property type="evidence" value="ECO:0000250"/>
    <property type="project" value="UniProtKB"/>
</dbReference>
<dbReference type="GO" id="GO:1901798">
    <property type="term" value="P:positive regulation of signal transduction by p53 class mediator"/>
    <property type="evidence" value="ECO:0000250"/>
    <property type="project" value="UniProtKB"/>
</dbReference>
<dbReference type="GO" id="GO:0045944">
    <property type="term" value="P:positive regulation of transcription by RNA polymerase II"/>
    <property type="evidence" value="ECO:0000316"/>
    <property type="project" value="MGI"/>
</dbReference>
<dbReference type="GO" id="GO:0071569">
    <property type="term" value="P:protein ufmylation"/>
    <property type="evidence" value="ECO:0000315"/>
    <property type="project" value="UniProtKB"/>
</dbReference>
<dbReference type="GO" id="GO:0000079">
    <property type="term" value="P:regulation of cyclin-dependent protein serine/threonine kinase activity"/>
    <property type="evidence" value="ECO:0000250"/>
    <property type="project" value="UniProtKB"/>
</dbReference>
<dbReference type="GO" id="GO:0010921">
    <property type="term" value="P:regulation of phosphatase activity"/>
    <property type="evidence" value="ECO:0000250"/>
    <property type="project" value="UniProtKB"/>
</dbReference>
<dbReference type="GO" id="GO:0072344">
    <property type="term" value="P:rescue of stalled ribosome"/>
    <property type="evidence" value="ECO:0007669"/>
    <property type="project" value="Ensembl"/>
</dbReference>
<dbReference type="GO" id="GO:0034976">
    <property type="term" value="P:response to endoplasmic reticulum stress"/>
    <property type="evidence" value="ECO:0000315"/>
    <property type="project" value="UniProtKB"/>
</dbReference>
<dbReference type="GO" id="GO:0032790">
    <property type="term" value="P:ribosome disassembly"/>
    <property type="evidence" value="ECO:0000250"/>
    <property type="project" value="UniProtKB"/>
</dbReference>
<dbReference type="InterPro" id="IPR008491">
    <property type="entry name" value="CDK5RAP3"/>
</dbReference>
<dbReference type="PANTHER" id="PTHR14894">
    <property type="entry name" value="CDK5 REGULATORY SUBUNIT-ASSOCIATED PROTEIN 3"/>
    <property type="match status" value="1"/>
</dbReference>
<dbReference type="PANTHER" id="PTHR14894:SF0">
    <property type="entry name" value="CDK5 REGULATORY SUBUNIT-ASSOCIATED PROTEIN 3"/>
    <property type="match status" value="1"/>
</dbReference>
<dbReference type="Pfam" id="PF05600">
    <property type="entry name" value="CDK5RAP3"/>
    <property type="match status" value="1"/>
</dbReference>
<feature type="chain" id="PRO_0000220517" description="CDK5 regulatory subunit-associated protein 3">
    <location>
        <begin position="1"/>
        <end position="503"/>
    </location>
</feature>
<feature type="region of interest" description="Required for interaction with UFL1 and mediates interaction with CHEK1" evidence="1">
    <location>
        <begin position="268"/>
        <end position="503"/>
    </location>
</feature>
<feature type="region of interest" description="RPL10a-binding domain (RBD)" evidence="1">
    <location>
        <begin position="352"/>
        <end position="367"/>
    </location>
</feature>
<feature type="short sequence motif" description="Shuffled ATG8-binding motif 1" evidence="1">
    <location>
        <begin position="266"/>
        <end position="269"/>
    </location>
</feature>
<feature type="short sequence motif" description="Shuffled ATG8-binding motif 2" evidence="1">
    <location>
        <begin position="288"/>
        <end position="291"/>
    </location>
</feature>
<feature type="short sequence motif" description="Shuffled ATG8-binding motif 3" evidence="1">
    <location>
        <begin position="306"/>
        <end position="309"/>
    </location>
</feature>
<feature type="cross-link" description="Glycyl lysine isopeptide (Lys-Gly) (interchain with G-Cter in SUMO2)" evidence="1">
    <location>
        <position position="447"/>
    </location>
</feature>
<proteinExistence type="evidence at protein level"/>
<keyword id="KW-0963">Cytoplasm</keyword>
<keyword id="KW-0206">Cytoskeleton</keyword>
<keyword id="KW-0256">Endoplasmic reticulum</keyword>
<keyword id="KW-1017">Isopeptide bond</keyword>
<keyword id="KW-0472">Membrane</keyword>
<keyword id="KW-0539">Nucleus</keyword>
<keyword id="KW-0597">Phosphoprotein</keyword>
<keyword id="KW-1185">Reference proteome</keyword>
<keyword id="KW-0832">Ubl conjugation</keyword>
<keyword id="KW-0833">Ubl conjugation pathway</keyword>
<evidence type="ECO:0000250" key="1">
    <source>
        <dbReference type="UniProtKB" id="Q96JB5"/>
    </source>
</evidence>
<evidence type="ECO:0000250" key="2">
    <source>
        <dbReference type="UniProtKB" id="Q9JLH7"/>
    </source>
</evidence>
<evidence type="ECO:0000269" key="3">
    <source>
    </source>
</evidence>
<evidence type="ECO:0000269" key="4">
    <source>
    </source>
</evidence>
<evidence type="ECO:0000303" key="5">
    <source>
    </source>
</evidence>
<evidence type="ECO:0000305" key="6"/>
<evidence type="ECO:0000305" key="7">
    <source>
    </source>
</evidence>
<evidence type="ECO:0000312" key="8">
    <source>
        <dbReference type="MGI" id="MGI:1933126"/>
    </source>
</evidence>
<protein>
    <recommendedName>
        <fullName evidence="6">CDK5 regulatory subunit-associated protein 3</fullName>
    </recommendedName>
</protein>
<comment type="function">
    <text evidence="1 4">Substrate adapter of E3 ligase complexes mediating ufmylation, the covalent attachment of the ubiquitin-like modifier UFM1 to substrate proteins, and which is involved in various processes, such as ribosome recycling and reticulophagy (also called ER-phagy) (PubMed:30635284). As part of the UREL complex, plays a key role in ribosome recycling by promoting mono-ufmylation of RPL26/uL24 subunit of the 60S ribosome (By similarity). Ufmylation of RPL26/uL24 occurs on free 60S ribosomes following ribosome dissociation: it weakens the junction between post-termination 60S subunits and SEC61 translocons, promoting release and recycling of the large ribosomal subunit from the endoplasmic reticulum membrane (By similarity). Ufmylation of RPL26/uL24 and subsequent 60S ribosome recycling either take place after normal termination of translation or after ribosome stalling during cotranslational translocation at the endoplasmic reticulum (By similarity). Within the UREL complex, CDK5RAP3 acts as a substrate adapter that constrains UFL1 ligase activity to mono-ufmylate RPL26/uL24 at 'Lys-134' (By similarity). The UREL complex is also involved in reticulophagy in response to endoplasmic reticulum stress by promoting ufmylation of proteins such as CYB5R3, thereby promoting lysosomal degradation of ufmylated proteins (By similarity). Also acts as a regulator of transcription: negatively regulates NF-kappa-B-mediated gene transcription through the control of RELA phosphorylation (By similarity). Also regulates mitotic G2/M transition checkpoint and mitotic G2 DNA damage checkpoint (By similarity). Through its interaction with CDKN2A/ARF and MDM2 may induce MDM2-dependent p53/TP53 ubiquitination, stabilization and activation in the nucleus, thereby promoting G1 cell cycle arrest and inhibition of cell proliferation (By similarity). May also play a role in the rupture of the nuclear envelope during apoptosis (By similarity). May regulate MAPK14 activity by regulating its dephosphorylation by PPM1D/WIP1 (By similarity). Required for liver development (PubMed:30635284).</text>
</comment>
<comment type="subunit">
    <text evidence="1 2 3 4">Substrate adapter component of the UFM1 ribosome E3 ligase (UREL) complex, composed of UFL1, DDRGK1 and CDK5RAP3 (PubMed:21494687, PubMed:30635284). Interaction with UFL1 anchors CDK5RAP3 in the cytoplasm, preventing its translocation to the nucleus which allows expression of the CCND1 cyclin and progression of cells through the G1/S transition (By similarity). Interacts with ATG8 family proteins MAP1LC3A, MAP1LC3B, GABARAP, GABARAPL1 and GABARAPL2. Interacts with CDK5R1; competes with CDK5RAP1 and CDK5RAP2. Interacts with RELA. Interacts with CHEK1; may negatively regulate CHEK1 and thereby stimulate entry into mitosis. Interacts with CDKN2A/ARF and MDM2; forms a ternary complex involved in regulation of p53/TP53. Interacts with MAPK14. Interacts with CCNB1. Interacts with TUBG1; may regulate CDK5RAP3 in mitotic G2/M transition checkpoint (By similarity).</text>
</comment>
<comment type="subcellular location">
    <subcellularLocation>
        <location evidence="1">Endoplasmic reticulum membrane</location>
    </subcellularLocation>
    <subcellularLocation>
        <location evidence="4">Cytoplasm</location>
    </subcellularLocation>
    <subcellularLocation>
        <location evidence="1">Nucleus</location>
    </subcellularLocation>
    <subcellularLocation>
        <location evidence="1">Cytoplasm</location>
        <location evidence="1">Cytoskeleton</location>
        <location evidence="1">Microtubule organizing center</location>
        <location evidence="1">Centrosome</location>
    </subcellularLocation>
    <subcellularLocation>
        <location evidence="1">Cytoplasm</location>
        <location evidence="1">Cytoskeleton</location>
    </subcellularLocation>
    <text evidence="1">Tethered to the endoplasmic reticulum membrane as part of the UFM1 ribosome E3 ligase (UREL) complex. Colocalizes and associates with microtubules.</text>
</comment>
<comment type="tissue specificity">
    <text evidence="3">Widely expressed with higher expression in secretory tissues.</text>
</comment>
<comment type="developmental stage">
    <text evidence="4">Predominantly expressed in hepatocytes during liver development.</text>
</comment>
<comment type="domain">
    <text evidence="1">The shuffled ATG8-binding motifs mediate interaction with both ATG8 family protein and UFM1.</text>
</comment>
<comment type="domain">
    <text evidence="1">The RPL10a-binding domain (RBD) anchors the UREL complex onto the ribosome via association with RPL10a/ul1.</text>
</comment>
<comment type="PTM">
    <text evidence="2">May be phosphorylated by CDK5.</text>
</comment>
<comment type="PTM">
    <text evidence="1">Ubiquitinated. Probably triggers proteasomal degradation and is negatively regulated by UFL1.</text>
</comment>
<comment type="PTM">
    <text evidence="7">May be ufmylated.</text>
</comment>
<comment type="PTM">
    <text evidence="1">Cleaved by caspases early during apoptosis, the resulting peptides may play a role in rupture of the nuclear envelope.</text>
</comment>
<comment type="disruption phenotype">
    <text evidence="4">Prenatal lethality, probably caused by severe liver hypoplasia (PubMed:30635284). 16.5 dpc mutant embryos also show defects in definitive erythropoiesis (PubMed:30635284). Conditional knockout mice lacking Cdk5rap3 in hepatocytes causes lethality after weaning -specific Cdk5rap3 display liver hypoplasia and die after weaning (PubMed:30635284).</text>
</comment>
<comment type="similarity">
    <text evidence="6">Belongs to the CDK5RAP3 family.</text>
</comment>
<organism>
    <name type="scientific">Mus musculus</name>
    <name type="common">Mouse</name>
    <dbReference type="NCBI Taxonomy" id="10090"/>
    <lineage>
        <taxon>Eukaryota</taxon>
        <taxon>Metazoa</taxon>
        <taxon>Chordata</taxon>
        <taxon>Craniata</taxon>
        <taxon>Vertebrata</taxon>
        <taxon>Euteleostomi</taxon>
        <taxon>Mammalia</taxon>
        <taxon>Eutheria</taxon>
        <taxon>Euarchontoglires</taxon>
        <taxon>Glires</taxon>
        <taxon>Rodentia</taxon>
        <taxon>Myomorpha</taxon>
        <taxon>Muroidea</taxon>
        <taxon>Muridae</taxon>
        <taxon>Murinae</taxon>
        <taxon>Mus</taxon>
        <taxon>Mus</taxon>
    </lineage>
</organism>
<gene>
    <name evidence="5 8" type="primary">Cdk5rap3</name>
</gene>
<accession>Q99LM2</accession>
<accession>Q3UE41</accession>